<comment type="function">
    <text>May be involved in transcriptional regulation.</text>
</comment>
<comment type="interaction">
    <interactant intactId="EBI-7227791">
        <id>Q15916</id>
    </interactant>
    <interactant intactId="EBI-8468186">
        <id>Q8IZU1</id>
        <label>FAM9A</label>
    </interactant>
    <organismsDiffer>false</organismsDiffer>
    <experiments>3</experiments>
</comment>
<comment type="interaction">
    <interactant intactId="EBI-7227791">
        <id>Q15916</id>
    </interactant>
    <interactant intactId="EBI-742388">
        <id>Q9H8W4</id>
        <label>PLEKHF2</label>
    </interactant>
    <organismsDiffer>false</organismsDiffer>
    <experiments>6</experiments>
</comment>
<comment type="interaction">
    <interactant intactId="EBI-7227791">
        <id>Q15916</id>
    </interactant>
    <interactant intactId="EBI-21251460">
        <id>O60260-5</id>
        <label>PRKN</label>
    </interactant>
    <organismsDiffer>false</organismsDiffer>
    <experiments>3</experiments>
</comment>
<comment type="interaction">
    <interactant intactId="EBI-7227791">
        <id>Q15916</id>
    </interactant>
    <interactant intactId="EBI-2340927">
        <id>P78317</id>
        <label>RNF4</label>
    </interactant>
    <organismsDiffer>false</organismsDiffer>
    <experiments>3</experiments>
</comment>
<comment type="interaction">
    <interactant intactId="EBI-7227791">
        <id>Q15916</id>
    </interactant>
    <interactant intactId="EBI-80140">
        <id>P63165</id>
        <label>SUMO1</label>
    </interactant>
    <organismsDiffer>false</organismsDiffer>
    <experiments>3</experiments>
</comment>
<comment type="interaction">
    <interactant intactId="EBI-7227791">
        <id>Q15916</id>
    </interactant>
    <interactant intactId="EBI-10175576">
        <id>G2XKQ0</id>
        <label>SUMO1P1</label>
    </interactant>
    <organismsDiffer>false</organismsDiffer>
    <experiments>3</experiments>
</comment>
<comment type="interaction">
    <interactant intactId="EBI-7227791">
        <id>Q15916</id>
    </interactant>
    <interactant intactId="EBI-12157263">
        <id>P40337-2</id>
        <label>VHL</label>
    </interactant>
    <organismsDiffer>false</organismsDiffer>
    <experiments>3</experiments>
</comment>
<comment type="interaction">
    <interactant intactId="EBI-7227791">
        <id>Q15916</id>
    </interactant>
    <interactant intactId="EBI-3918996">
        <id>Q9HCK0</id>
        <label>ZBTB26</label>
    </interactant>
    <organismsDiffer>false</organismsDiffer>
    <experiments>6</experiments>
</comment>
<comment type="interaction">
    <interactant intactId="EBI-7227791">
        <id>Q15916</id>
    </interactant>
    <interactant intactId="EBI-744864">
        <id>P10074</id>
        <label>ZBTB48</label>
    </interactant>
    <organismsDiffer>false</organismsDiffer>
    <experiments>3</experiments>
</comment>
<comment type="interaction">
    <interactant intactId="EBI-7227791">
        <id>Q15916</id>
    </interactant>
    <interactant intactId="EBI-10177272">
        <id>P15622-3</id>
        <label>ZNF250</label>
    </interactant>
    <organismsDiffer>false</organismsDiffer>
    <experiments>3</experiments>
</comment>
<comment type="subcellular location">
    <subcellularLocation>
        <location evidence="4">Nucleus</location>
    </subcellularLocation>
</comment>
<comment type="tissue specificity">
    <text evidence="4">Widely expressed with highest levels in brain.</text>
</comment>
<evidence type="ECO:0000255" key="1">
    <source>
        <dbReference type="PROSITE-ProRule" id="PRU00037"/>
    </source>
</evidence>
<evidence type="ECO:0000255" key="2">
    <source>
        <dbReference type="PROSITE-ProRule" id="PRU00042"/>
    </source>
</evidence>
<evidence type="ECO:0000256" key="3">
    <source>
        <dbReference type="SAM" id="MobiDB-lite"/>
    </source>
</evidence>
<evidence type="ECO:0000269" key="4">
    <source>
    </source>
</evidence>
<evidence type="ECO:0007744" key="5">
    <source>
    </source>
</evidence>
<proteinExistence type="evidence at protein level"/>
<name>ZBTB6_HUMAN</name>
<reference key="1">
    <citation type="journal article" date="1994" name="Genes Dev.">
        <title>The POZ domain: a conserved protein-protein interaction motif.</title>
        <authorList>
            <person name="Bardwell V.J."/>
            <person name="Treisman R."/>
        </authorList>
    </citation>
    <scope>NUCLEOTIDE SEQUENCE [MRNA]</scope>
    <scope>SUBCELLULAR LOCATION</scope>
    <scope>TISSUE SPECIFICITY</scope>
    <source>
        <tissue>Placenta</tissue>
    </source>
</reference>
<reference key="2">
    <citation type="journal article" date="2004" name="Nat. Genet.">
        <title>Complete sequencing and characterization of 21,243 full-length human cDNAs.</title>
        <authorList>
            <person name="Ota T."/>
            <person name="Suzuki Y."/>
            <person name="Nishikawa T."/>
            <person name="Otsuki T."/>
            <person name="Sugiyama T."/>
            <person name="Irie R."/>
            <person name="Wakamatsu A."/>
            <person name="Hayashi K."/>
            <person name="Sato H."/>
            <person name="Nagai K."/>
            <person name="Kimura K."/>
            <person name="Makita H."/>
            <person name="Sekine M."/>
            <person name="Obayashi M."/>
            <person name="Nishi T."/>
            <person name="Shibahara T."/>
            <person name="Tanaka T."/>
            <person name="Ishii S."/>
            <person name="Yamamoto J."/>
            <person name="Saito K."/>
            <person name="Kawai Y."/>
            <person name="Isono Y."/>
            <person name="Nakamura Y."/>
            <person name="Nagahari K."/>
            <person name="Murakami K."/>
            <person name="Yasuda T."/>
            <person name="Iwayanagi T."/>
            <person name="Wagatsuma M."/>
            <person name="Shiratori A."/>
            <person name="Sudo H."/>
            <person name="Hosoiri T."/>
            <person name="Kaku Y."/>
            <person name="Kodaira H."/>
            <person name="Kondo H."/>
            <person name="Sugawara M."/>
            <person name="Takahashi M."/>
            <person name="Kanda K."/>
            <person name="Yokoi T."/>
            <person name="Furuya T."/>
            <person name="Kikkawa E."/>
            <person name="Omura Y."/>
            <person name="Abe K."/>
            <person name="Kamihara K."/>
            <person name="Katsuta N."/>
            <person name="Sato K."/>
            <person name="Tanikawa M."/>
            <person name="Yamazaki M."/>
            <person name="Ninomiya K."/>
            <person name="Ishibashi T."/>
            <person name="Yamashita H."/>
            <person name="Murakawa K."/>
            <person name="Fujimori K."/>
            <person name="Tanai H."/>
            <person name="Kimata M."/>
            <person name="Watanabe M."/>
            <person name="Hiraoka S."/>
            <person name="Chiba Y."/>
            <person name="Ishida S."/>
            <person name="Ono Y."/>
            <person name="Takiguchi S."/>
            <person name="Watanabe S."/>
            <person name="Yosida M."/>
            <person name="Hotuta T."/>
            <person name="Kusano J."/>
            <person name="Kanehori K."/>
            <person name="Takahashi-Fujii A."/>
            <person name="Hara H."/>
            <person name="Tanase T.-O."/>
            <person name="Nomura Y."/>
            <person name="Togiya S."/>
            <person name="Komai F."/>
            <person name="Hara R."/>
            <person name="Takeuchi K."/>
            <person name="Arita M."/>
            <person name="Imose N."/>
            <person name="Musashino K."/>
            <person name="Yuuki H."/>
            <person name="Oshima A."/>
            <person name="Sasaki N."/>
            <person name="Aotsuka S."/>
            <person name="Yoshikawa Y."/>
            <person name="Matsunawa H."/>
            <person name="Ichihara T."/>
            <person name="Shiohata N."/>
            <person name="Sano S."/>
            <person name="Moriya S."/>
            <person name="Momiyama H."/>
            <person name="Satoh N."/>
            <person name="Takami S."/>
            <person name="Terashima Y."/>
            <person name="Suzuki O."/>
            <person name="Nakagawa S."/>
            <person name="Senoh A."/>
            <person name="Mizoguchi H."/>
            <person name="Goto Y."/>
            <person name="Shimizu F."/>
            <person name="Wakebe H."/>
            <person name="Hishigaki H."/>
            <person name="Watanabe T."/>
            <person name="Sugiyama A."/>
            <person name="Takemoto M."/>
            <person name="Kawakami B."/>
            <person name="Yamazaki M."/>
            <person name="Watanabe K."/>
            <person name="Kumagai A."/>
            <person name="Itakura S."/>
            <person name="Fukuzumi Y."/>
            <person name="Fujimori Y."/>
            <person name="Komiyama M."/>
            <person name="Tashiro H."/>
            <person name="Tanigami A."/>
            <person name="Fujiwara T."/>
            <person name="Ono T."/>
            <person name="Yamada K."/>
            <person name="Fujii Y."/>
            <person name="Ozaki K."/>
            <person name="Hirao M."/>
            <person name="Ohmori Y."/>
            <person name="Kawabata A."/>
            <person name="Hikiji T."/>
            <person name="Kobatake N."/>
            <person name="Inagaki H."/>
            <person name="Ikema Y."/>
            <person name="Okamoto S."/>
            <person name="Okitani R."/>
            <person name="Kawakami T."/>
            <person name="Noguchi S."/>
            <person name="Itoh T."/>
            <person name="Shigeta K."/>
            <person name="Senba T."/>
            <person name="Matsumura K."/>
            <person name="Nakajima Y."/>
            <person name="Mizuno T."/>
            <person name="Morinaga M."/>
            <person name="Sasaki M."/>
            <person name="Togashi T."/>
            <person name="Oyama M."/>
            <person name="Hata H."/>
            <person name="Watanabe M."/>
            <person name="Komatsu T."/>
            <person name="Mizushima-Sugano J."/>
            <person name="Satoh T."/>
            <person name="Shirai Y."/>
            <person name="Takahashi Y."/>
            <person name="Nakagawa K."/>
            <person name="Okumura K."/>
            <person name="Nagase T."/>
            <person name="Nomura N."/>
            <person name="Kikuchi H."/>
            <person name="Masuho Y."/>
            <person name="Yamashita R."/>
            <person name="Nakai K."/>
            <person name="Yada T."/>
            <person name="Nakamura Y."/>
            <person name="Ohara O."/>
            <person name="Isogai T."/>
            <person name="Sugano S."/>
        </authorList>
    </citation>
    <scope>NUCLEOTIDE SEQUENCE [LARGE SCALE MRNA]</scope>
    <source>
        <tissue>Testis</tissue>
    </source>
</reference>
<reference key="3">
    <citation type="submission" date="2005-07" db="EMBL/GenBank/DDBJ databases">
        <authorList>
            <person name="Mural R.J."/>
            <person name="Istrail S."/>
            <person name="Sutton G.G."/>
            <person name="Florea L."/>
            <person name="Halpern A.L."/>
            <person name="Mobarry C.M."/>
            <person name="Lippert R."/>
            <person name="Walenz B."/>
            <person name="Shatkay H."/>
            <person name="Dew I."/>
            <person name="Miller J.R."/>
            <person name="Flanigan M.J."/>
            <person name="Edwards N.J."/>
            <person name="Bolanos R."/>
            <person name="Fasulo D."/>
            <person name="Halldorsson B.V."/>
            <person name="Hannenhalli S."/>
            <person name="Turner R."/>
            <person name="Yooseph S."/>
            <person name="Lu F."/>
            <person name="Nusskern D.R."/>
            <person name="Shue B.C."/>
            <person name="Zheng X.H."/>
            <person name="Zhong F."/>
            <person name="Delcher A.L."/>
            <person name="Huson D.H."/>
            <person name="Kravitz S.A."/>
            <person name="Mouchard L."/>
            <person name="Reinert K."/>
            <person name="Remington K.A."/>
            <person name="Clark A.G."/>
            <person name="Waterman M.S."/>
            <person name="Eichler E.E."/>
            <person name="Adams M.D."/>
            <person name="Hunkapiller M.W."/>
            <person name="Myers E.W."/>
            <person name="Venter J.C."/>
        </authorList>
    </citation>
    <scope>NUCLEOTIDE SEQUENCE [LARGE SCALE GENOMIC DNA]</scope>
</reference>
<reference key="4">
    <citation type="journal article" date="2004" name="Genome Res.">
        <title>The status, quality, and expansion of the NIH full-length cDNA project: the Mammalian Gene Collection (MGC).</title>
        <authorList>
            <consortium name="The MGC Project Team"/>
        </authorList>
    </citation>
    <scope>NUCLEOTIDE SEQUENCE [LARGE SCALE MRNA]</scope>
    <source>
        <tissue>Testis</tissue>
    </source>
</reference>
<reference key="5">
    <citation type="journal article" date="2013" name="J. Proteome Res.">
        <title>Toward a comprehensive characterization of a human cancer cell phosphoproteome.</title>
        <authorList>
            <person name="Zhou H."/>
            <person name="Di Palma S."/>
            <person name="Preisinger C."/>
            <person name="Peng M."/>
            <person name="Polat A.N."/>
            <person name="Heck A.J."/>
            <person name="Mohammed S."/>
        </authorList>
    </citation>
    <scope>PHOSPHORYLATION [LARGE SCALE ANALYSIS] AT SER-202</scope>
    <scope>IDENTIFICATION BY MASS SPECTROMETRY [LARGE SCALE ANALYSIS]</scope>
    <source>
        <tissue>Cervix carcinoma</tissue>
    </source>
</reference>
<feature type="chain" id="PRO_0000047608" description="Zinc finger and BTB domain-containing protein 6">
    <location>
        <begin position="1"/>
        <end position="424"/>
    </location>
</feature>
<feature type="domain" description="BTB" evidence="1">
    <location>
        <begin position="33"/>
        <end position="97"/>
    </location>
</feature>
<feature type="zinc finger region" description="C2H2-type 1" evidence="2">
    <location>
        <begin position="301"/>
        <end position="323"/>
    </location>
</feature>
<feature type="zinc finger region" description="C2H2-type 2" evidence="2">
    <location>
        <begin position="326"/>
        <end position="348"/>
    </location>
</feature>
<feature type="zinc finger region" description="C2H2-type 3" evidence="2">
    <location>
        <begin position="354"/>
        <end position="376"/>
    </location>
</feature>
<feature type="zinc finger region" description="C2H2-type 4" evidence="2">
    <location>
        <begin position="382"/>
        <end position="405"/>
    </location>
</feature>
<feature type="region of interest" description="Disordered" evidence="3">
    <location>
        <begin position="402"/>
        <end position="424"/>
    </location>
</feature>
<feature type="compositionally biased region" description="Basic and acidic residues" evidence="3">
    <location>
        <begin position="408"/>
        <end position="424"/>
    </location>
</feature>
<feature type="modified residue" description="Phosphoserine" evidence="5">
    <location>
        <position position="202"/>
    </location>
</feature>
<dbReference type="EMBL" id="X82018">
    <property type="protein sequence ID" value="CAA57543.1"/>
    <property type="molecule type" value="mRNA"/>
</dbReference>
<dbReference type="EMBL" id="AK292401">
    <property type="protein sequence ID" value="BAF85090.1"/>
    <property type="molecule type" value="mRNA"/>
</dbReference>
<dbReference type="EMBL" id="CH471090">
    <property type="protein sequence ID" value="EAW87552.1"/>
    <property type="molecule type" value="Genomic_DNA"/>
</dbReference>
<dbReference type="EMBL" id="BC037282">
    <property type="protein sequence ID" value="AAH37282.1"/>
    <property type="molecule type" value="mRNA"/>
</dbReference>
<dbReference type="CCDS" id="CCDS6846.1"/>
<dbReference type="PIR" id="I39310">
    <property type="entry name" value="I39310"/>
</dbReference>
<dbReference type="RefSeq" id="NP_006617.1">
    <property type="nucleotide sequence ID" value="NM_006626.6"/>
</dbReference>
<dbReference type="SMR" id="Q15916"/>
<dbReference type="BioGRID" id="115991">
    <property type="interactions" value="13"/>
</dbReference>
<dbReference type="DIP" id="DIP-2653N"/>
<dbReference type="FunCoup" id="Q15916">
    <property type="interactions" value="3166"/>
</dbReference>
<dbReference type="IntAct" id="Q15916">
    <property type="interactions" value="12"/>
</dbReference>
<dbReference type="MINT" id="Q15916"/>
<dbReference type="STRING" id="9606.ENSP00000362763"/>
<dbReference type="GlyGen" id="Q15916">
    <property type="glycosylation" value="1 site, 1 O-linked glycan (1 site)"/>
</dbReference>
<dbReference type="iPTMnet" id="Q15916"/>
<dbReference type="PhosphoSitePlus" id="Q15916"/>
<dbReference type="BioMuta" id="ZBTB6"/>
<dbReference type="DMDM" id="46577664"/>
<dbReference type="jPOST" id="Q15916"/>
<dbReference type="MassIVE" id="Q15916"/>
<dbReference type="PaxDb" id="9606-ENSP00000362763"/>
<dbReference type="PeptideAtlas" id="Q15916"/>
<dbReference type="ProteomicsDB" id="60817"/>
<dbReference type="Antibodypedia" id="30390">
    <property type="antibodies" value="220 antibodies from 28 providers"/>
</dbReference>
<dbReference type="DNASU" id="10773"/>
<dbReference type="Ensembl" id="ENST00000373659.4">
    <property type="protein sequence ID" value="ENSP00000362763.3"/>
    <property type="gene ID" value="ENSG00000186130.5"/>
</dbReference>
<dbReference type="GeneID" id="10773"/>
<dbReference type="KEGG" id="hsa:10773"/>
<dbReference type="MANE-Select" id="ENST00000373659.4">
    <property type="protein sequence ID" value="ENSP00000362763.3"/>
    <property type="RefSeq nucleotide sequence ID" value="NM_006626.6"/>
    <property type="RefSeq protein sequence ID" value="NP_006617.1"/>
</dbReference>
<dbReference type="UCSC" id="uc004bnh.5">
    <property type="organism name" value="human"/>
</dbReference>
<dbReference type="AGR" id="HGNC:16764"/>
<dbReference type="CTD" id="10773"/>
<dbReference type="GeneCards" id="ZBTB6"/>
<dbReference type="HGNC" id="HGNC:16764">
    <property type="gene designation" value="ZBTB6"/>
</dbReference>
<dbReference type="HPA" id="ENSG00000186130">
    <property type="expression patterns" value="Low tissue specificity"/>
</dbReference>
<dbReference type="MIM" id="605976">
    <property type="type" value="gene"/>
</dbReference>
<dbReference type="neXtProt" id="NX_Q15916"/>
<dbReference type="OpenTargets" id="ENSG00000186130"/>
<dbReference type="PharmGKB" id="PA134939601"/>
<dbReference type="VEuPathDB" id="HostDB:ENSG00000186130"/>
<dbReference type="eggNOG" id="KOG1721">
    <property type="taxonomic scope" value="Eukaryota"/>
</dbReference>
<dbReference type="GeneTree" id="ENSGT00940000161459"/>
<dbReference type="HOGENOM" id="CLU_037856_1_0_1"/>
<dbReference type="InParanoid" id="Q15916"/>
<dbReference type="OMA" id="TEMSGNH"/>
<dbReference type="OrthoDB" id="1405595at2759"/>
<dbReference type="PAN-GO" id="Q15916">
    <property type="GO annotations" value="4 GO annotations based on evolutionary models"/>
</dbReference>
<dbReference type="PhylomeDB" id="Q15916"/>
<dbReference type="TreeFam" id="TF333162"/>
<dbReference type="PathwayCommons" id="Q15916"/>
<dbReference type="SignaLink" id="Q15916"/>
<dbReference type="BioGRID-ORCS" id="10773">
    <property type="hits" value="15 hits in 1219 CRISPR screens"/>
</dbReference>
<dbReference type="GenomeRNAi" id="10773"/>
<dbReference type="Pharos" id="Q15916">
    <property type="development level" value="Tbio"/>
</dbReference>
<dbReference type="PRO" id="PR:Q15916"/>
<dbReference type="Proteomes" id="UP000005640">
    <property type="component" value="Chromosome 9"/>
</dbReference>
<dbReference type="RNAct" id="Q15916">
    <property type="molecule type" value="protein"/>
</dbReference>
<dbReference type="Bgee" id="ENSG00000186130">
    <property type="expression patterns" value="Expressed in cortical plate and 108 other cell types or tissues"/>
</dbReference>
<dbReference type="GO" id="GO:0005739">
    <property type="term" value="C:mitochondrion"/>
    <property type="evidence" value="ECO:0000314"/>
    <property type="project" value="HPA"/>
</dbReference>
<dbReference type="GO" id="GO:0005654">
    <property type="term" value="C:nucleoplasm"/>
    <property type="evidence" value="ECO:0000314"/>
    <property type="project" value="HPA"/>
</dbReference>
<dbReference type="GO" id="GO:0005634">
    <property type="term" value="C:nucleus"/>
    <property type="evidence" value="ECO:0000304"/>
    <property type="project" value="ProtInc"/>
</dbReference>
<dbReference type="GO" id="GO:0003677">
    <property type="term" value="F:DNA binding"/>
    <property type="evidence" value="ECO:0000304"/>
    <property type="project" value="ProtInc"/>
</dbReference>
<dbReference type="GO" id="GO:0001227">
    <property type="term" value="F:DNA-binding transcription repressor activity, RNA polymerase II-specific"/>
    <property type="evidence" value="ECO:0000318"/>
    <property type="project" value="GO_Central"/>
</dbReference>
<dbReference type="GO" id="GO:0000978">
    <property type="term" value="F:RNA polymerase II cis-regulatory region sequence-specific DNA binding"/>
    <property type="evidence" value="ECO:0000318"/>
    <property type="project" value="GO_Central"/>
</dbReference>
<dbReference type="GO" id="GO:0008270">
    <property type="term" value="F:zinc ion binding"/>
    <property type="evidence" value="ECO:0007669"/>
    <property type="project" value="UniProtKB-KW"/>
</dbReference>
<dbReference type="GO" id="GO:0000122">
    <property type="term" value="P:negative regulation of transcription by RNA polymerase II"/>
    <property type="evidence" value="ECO:0000318"/>
    <property type="project" value="GO_Central"/>
</dbReference>
<dbReference type="GO" id="GO:0001817">
    <property type="term" value="P:regulation of cytokine production"/>
    <property type="evidence" value="ECO:0000318"/>
    <property type="project" value="GO_Central"/>
</dbReference>
<dbReference type="GO" id="GO:0002682">
    <property type="term" value="P:regulation of immune system process"/>
    <property type="evidence" value="ECO:0000318"/>
    <property type="project" value="GO_Central"/>
</dbReference>
<dbReference type="CDD" id="cd18197">
    <property type="entry name" value="BTB_POZ_ZBTB6"/>
    <property type="match status" value="1"/>
</dbReference>
<dbReference type="FunFam" id="3.30.160.60:FF:000333">
    <property type="entry name" value="Zinc finger and BTB domain-containing protein 26"/>
    <property type="match status" value="1"/>
</dbReference>
<dbReference type="FunFam" id="3.30.710.10:FF:000047">
    <property type="entry name" value="Zinc finger and BTB domain-containing protein 26"/>
    <property type="match status" value="1"/>
</dbReference>
<dbReference type="FunFam" id="3.30.160.60:FF:001873">
    <property type="entry name" value="Zinc finger and BTB domain-containing protein 6"/>
    <property type="match status" value="1"/>
</dbReference>
<dbReference type="Gene3D" id="3.30.160.60">
    <property type="entry name" value="Classic Zinc Finger"/>
    <property type="match status" value="3"/>
</dbReference>
<dbReference type="Gene3D" id="3.30.710.10">
    <property type="entry name" value="Potassium Channel Kv1.1, Chain A"/>
    <property type="match status" value="1"/>
</dbReference>
<dbReference type="InterPro" id="IPR000210">
    <property type="entry name" value="BTB/POZ_dom"/>
</dbReference>
<dbReference type="InterPro" id="IPR011333">
    <property type="entry name" value="SKP1/BTB/POZ_sf"/>
</dbReference>
<dbReference type="InterPro" id="IPR036236">
    <property type="entry name" value="Znf_C2H2_sf"/>
</dbReference>
<dbReference type="InterPro" id="IPR013087">
    <property type="entry name" value="Znf_C2H2_type"/>
</dbReference>
<dbReference type="InterPro" id="IPR050457">
    <property type="entry name" value="ZnFinger_BTB_dom_contain"/>
</dbReference>
<dbReference type="PANTHER" id="PTHR46105">
    <property type="entry name" value="AGAP004733-PA"/>
    <property type="match status" value="1"/>
</dbReference>
<dbReference type="PANTHER" id="PTHR46105:SF5">
    <property type="entry name" value="ZINC FINGER AND BTB DOMAIN-CONTAINING PROTEIN 44 ISOFORM X1"/>
    <property type="match status" value="1"/>
</dbReference>
<dbReference type="Pfam" id="PF00651">
    <property type="entry name" value="BTB"/>
    <property type="match status" value="1"/>
</dbReference>
<dbReference type="Pfam" id="PF00096">
    <property type="entry name" value="zf-C2H2"/>
    <property type="match status" value="2"/>
</dbReference>
<dbReference type="SMART" id="SM00225">
    <property type="entry name" value="BTB"/>
    <property type="match status" value="1"/>
</dbReference>
<dbReference type="SMART" id="SM00355">
    <property type="entry name" value="ZnF_C2H2"/>
    <property type="match status" value="4"/>
</dbReference>
<dbReference type="SUPFAM" id="SSF57667">
    <property type="entry name" value="beta-beta-alpha zinc fingers"/>
    <property type="match status" value="2"/>
</dbReference>
<dbReference type="SUPFAM" id="SSF54695">
    <property type="entry name" value="POZ domain"/>
    <property type="match status" value="1"/>
</dbReference>
<dbReference type="PROSITE" id="PS50097">
    <property type="entry name" value="BTB"/>
    <property type="match status" value="1"/>
</dbReference>
<dbReference type="PROSITE" id="PS00028">
    <property type="entry name" value="ZINC_FINGER_C2H2_1"/>
    <property type="match status" value="4"/>
</dbReference>
<dbReference type="PROSITE" id="PS50157">
    <property type="entry name" value="ZINC_FINGER_C2H2_2"/>
    <property type="match status" value="4"/>
</dbReference>
<gene>
    <name type="primary">ZBTB6</name>
    <name type="synonym">ZID</name>
    <name type="synonym">ZNF482</name>
</gene>
<keyword id="KW-0238">DNA-binding</keyword>
<keyword id="KW-0479">Metal-binding</keyword>
<keyword id="KW-0539">Nucleus</keyword>
<keyword id="KW-0597">Phosphoprotein</keyword>
<keyword id="KW-1267">Proteomics identification</keyword>
<keyword id="KW-1185">Reference proteome</keyword>
<keyword id="KW-0677">Repeat</keyword>
<keyword id="KW-0804">Transcription</keyword>
<keyword id="KW-0805">Transcription regulation</keyword>
<keyword id="KW-0862">Zinc</keyword>
<keyword id="KW-0863">Zinc-finger</keyword>
<protein>
    <recommendedName>
        <fullName>Zinc finger and BTB domain-containing protein 6</fullName>
    </recommendedName>
    <alternativeName>
        <fullName>Zinc finger protein 482</fullName>
    </alternativeName>
    <alternativeName>
        <fullName>Zinc finger protein with interaction domain</fullName>
    </alternativeName>
</protein>
<accession>Q15916</accession>
<accession>A8K8N6</accession>
<sequence>MAAESDVLHFQFEQQGDVVLQKMNLLRQQNLFCDVSIYINDTEFQGHKVILAACSTFMRDQFLLTQSKHVRITILQSAEVGRKLLLSCYTGALEVKRKELLKYLTAASYLQMVHIVEKCTEALSKYLEIDLSMKNNNQHTDLCQSSDPDVKNEDENSDKDCEIIEISEDSPVNIDFHVKEEESNALQSTVESLTSERKEMKSPELSTVDIGFKDNEICILHVESISTAGVENGQFSQPCTSSKASMYFSETQHSLINSTVESRVAEVPGNQDQGLFCENTEGSYGTVSEIQNLEEGYSLRHQCPRCPRGFLHVENYLRHLKMHKLFLCLQCGKTFTQKKNLNRHIRGHMGIRPFQCTVCLKTFTAKSTLQDHLNIHSGDRPYKCHCCDMDFKHKSALKKHLTSVHGRSSGEKLSRPDLKRQSLL</sequence>
<organism>
    <name type="scientific">Homo sapiens</name>
    <name type="common">Human</name>
    <dbReference type="NCBI Taxonomy" id="9606"/>
    <lineage>
        <taxon>Eukaryota</taxon>
        <taxon>Metazoa</taxon>
        <taxon>Chordata</taxon>
        <taxon>Craniata</taxon>
        <taxon>Vertebrata</taxon>
        <taxon>Euteleostomi</taxon>
        <taxon>Mammalia</taxon>
        <taxon>Eutheria</taxon>
        <taxon>Euarchontoglires</taxon>
        <taxon>Primates</taxon>
        <taxon>Haplorrhini</taxon>
        <taxon>Catarrhini</taxon>
        <taxon>Hominidae</taxon>
        <taxon>Homo</taxon>
    </lineage>
</organism>